<organism>
    <name type="scientific">Escherichia fergusonii (strain ATCC 35469 / DSM 13698 / CCUG 18766 / IAM 14443 / JCM 21226 / LMG 7866 / NBRC 102419 / NCTC 12128 / CDC 0568-73)</name>
    <dbReference type="NCBI Taxonomy" id="585054"/>
    <lineage>
        <taxon>Bacteria</taxon>
        <taxon>Pseudomonadati</taxon>
        <taxon>Pseudomonadota</taxon>
        <taxon>Gammaproteobacteria</taxon>
        <taxon>Enterobacterales</taxon>
        <taxon>Enterobacteriaceae</taxon>
        <taxon>Escherichia</taxon>
    </lineage>
</organism>
<protein>
    <recommendedName>
        <fullName evidence="1">L-arabinose isomerase</fullName>
        <ecNumber evidence="1">5.3.1.4</ecNumber>
    </recommendedName>
</protein>
<gene>
    <name evidence="1" type="primary">araA</name>
    <name type="ordered locus">EFER_0071</name>
</gene>
<sequence>MTIFDNYEVWFVIGSQHLYGPETLHQVTQHAEHVVNALNTEAKLPCKLVLKPLGTTPDEITAICRDANYDDRCAGLVVWLHTFSPAKMWINGLTMLNKPLLQFHTQFNAVLPWDSIDMDFMNLNQTAHGGREFGFIGARMRQQHAVVTGHWQDKQAHERIGSWMRQAVSKQDTRHLKVCRFGDNMREVAVTDGDKVAAQIKFGFSVNTWAVGDLVQVVNSISDGDVNALVDEYESSYTMTPATQIHGEKRQNVLEAARIELGMKRFLEQGGFHAFTTTFEDLHGLKQLPGLAVQRLMQQGYGFAGEGDWKTAALLRIMKVMSTGLQGGTSFMEDYTYHFEKGNDLVLGSHMLEVCPSIAAEEKPILDVQHLGIGGKDDPARLIFNTQTGPAIVASLIDLGDRYRLLVNCIDTVKTPYSLPKLPVANALWKAQPDLPTASEAWILAGGAHHTVFSHALNLNDMRQFAEMHDIEITVIDNDTRLPAFKDALRWNEVYYGFRR</sequence>
<feature type="chain" id="PRO_1000127607" description="L-arabinose isomerase">
    <location>
        <begin position="1"/>
        <end position="500"/>
    </location>
</feature>
<feature type="binding site" evidence="1">
    <location>
        <position position="306"/>
    </location>
    <ligand>
        <name>Mn(2+)</name>
        <dbReference type="ChEBI" id="CHEBI:29035"/>
    </ligand>
</feature>
<feature type="binding site" evidence="1">
    <location>
        <position position="333"/>
    </location>
    <ligand>
        <name>Mn(2+)</name>
        <dbReference type="ChEBI" id="CHEBI:29035"/>
    </ligand>
</feature>
<feature type="binding site" evidence="1">
    <location>
        <position position="350"/>
    </location>
    <ligand>
        <name>Mn(2+)</name>
        <dbReference type="ChEBI" id="CHEBI:29035"/>
    </ligand>
</feature>
<feature type="binding site" evidence="1">
    <location>
        <position position="450"/>
    </location>
    <ligand>
        <name>Mn(2+)</name>
        <dbReference type="ChEBI" id="CHEBI:29035"/>
    </ligand>
</feature>
<keyword id="KW-0054">Arabinose catabolism</keyword>
<keyword id="KW-0119">Carbohydrate metabolism</keyword>
<keyword id="KW-0413">Isomerase</keyword>
<keyword id="KW-0464">Manganese</keyword>
<keyword id="KW-0479">Metal-binding</keyword>
<accession>B7LVT3</accession>
<comment type="function">
    <text evidence="1">Catalyzes the conversion of L-arabinose to L-ribulose.</text>
</comment>
<comment type="catalytic activity">
    <reaction evidence="1">
        <text>beta-L-arabinopyranose = L-ribulose</text>
        <dbReference type="Rhea" id="RHEA:14821"/>
        <dbReference type="ChEBI" id="CHEBI:16880"/>
        <dbReference type="ChEBI" id="CHEBI:40886"/>
        <dbReference type="EC" id="5.3.1.4"/>
    </reaction>
</comment>
<comment type="cofactor">
    <cofactor evidence="1">
        <name>Mn(2+)</name>
        <dbReference type="ChEBI" id="CHEBI:29035"/>
    </cofactor>
    <text evidence="1">Binds 1 Mn(2+) ion per subunit.</text>
</comment>
<comment type="pathway">
    <text evidence="1">Carbohydrate degradation; L-arabinose degradation via L-ribulose; D-xylulose 5-phosphate from L-arabinose (bacterial route): step 1/3.</text>
</comment>
<comment type="subunit">
    <text evidence="1">Homohexamer.</text>
</comment>
<comment type="similarity">
    <text evidence="1">Belongs to the arabinose isomerase family.</text>
</comment>
<evidence type="ECO:0000255" key="1">
    <source>
        <dbReference type="HAMAP-Rule" id="MF_00519"/>
    </source>
</evidence>
<dbReference type="EC" id="5.3.1.4" evidence="1"/>
<dbReference type="EMBL" id="CU928158">
    <property type="protein sequence ID" value="CAQ87657.1"/>
    <property type="molecule type" value="Genomic_DNA"/>
</dbReference>
<dbReference type="RefSeq" id="WP_000151711.1">
    <property type="nucleotide sequence ID" value="NC_011740.1"/>
</dbReference>
<dbReference type="SMR" id="B7LVT3"/>
<dbReference type="GeneID" id="75058841"/>
<dbReference type="KEGG" id="efe:EFER_0071"/>
<dbReference type="HOGENOM" id="CLU_045663_0_0_6"/>
<dbReference type="OrthoDB" id="9765600at2"/>
<dbReference type="UniPathway" id="UPA00145">
    <property type="reaction ID" value="UER00565"/>
</dbReference>
<dbReference type="Proteomes" id="UP000000745">
    <property type="component" value="Chromosome"/>
</dbReference>
<dbReference type="GO" id="GO:0005829">
    <property type="term" value="C:cytosol"/>
    <property type="evidence" value="ECO:0007669"/>
    <property type="project" value="TreeGrafter"/>
</dbReference>
<dbReference type="GO" id="GO:0008733">
    <property type="term" value="F:L-arabinose isomerase activity"/>
    <property type="evidence" value="ECO:0007669"/>
    <property type="project" value="UniProtKB-UniRule"/>
</dbReference>
<dbReference type="GO" id="GO:0030145">
    <property type="term" value="F:manganese ion binding"/>
    <property type="evidence" value="ECO:0007669"/>
    <property type="project" value="UniProtKB-UniRule"/>
</dbReference>
<dbReference type="GO" id="GO:0019569">
    <property type="term" value="P:L-arabinose catabolic process to xylulose 5-phosphate"/>
    <property type="evidence" value="ECO:0007669"/>
    <property type="project" value="UniProtKB-UniRule"/>
</dbReference>
<dbReference type="CDD" id="cd03557">
    <property type="entry name" value="L-arabinose_isomerase"/>
    <property type="match status" value="1"/>
</dbReference>
<dbReference type="FunFam" id="3.40.50.10940:FF:000001">
    <property type="entry name" value="L-arabinose isomerase"/>
    <property type="match status" value="1"/>
</dbReference>
<dbReference type="Gene3D" id="3.40.50.10940">
    <property type="match status" value="1"/>
</dbReference>
<dbReference type="HAMAP" id="MF_00519">
    <property type="entry name" value="Arabinose_Isome"/>
    <property type="match status" value="1"/>
</dbReference>
<dbReference type="InterPro" id="IPR024664">
    <property type="entry name" value="Ara_Isoase_C"/>
</dbReference>
<dbReference type="InterPro" id="IPR055390">
    <property type="entry name" value="AraA_central"/>
</dbReference>
<dbReference type="InterPro" id="IPR055389">
    <property type="entry name" value="AraA_N"/>
</dbReference>
<dbReference type="InterPro" id="IPR038583">
    <property type="entry name" value="AraA_N_sf"/>
</dbReference>
<dbReference type="InterPro" id="IPR004216">
    <property type="entry name" value="Fuc/Ara_isomerase_C"/>
</dbReference>
<dbReference type="InterPro" id="IPR009015">
    <property type="entry name" value="Fucose_isomerase_N/cen_sf"/>
</dbReference>
<dbReference type="InterPro" id="IPR003762">
    <property type="entry name" value="Lara_isomerase"/>
</dbReference>
<dbReference type="NCBIfam" id="NF002795">
    <property type="entry name" value="PRK02929.1"/>
    <property type="match status" value="1"/>
</dbReference>
<dbReference type="PANTHER" id="PTHR38464">
    <property type="entry name" value="L-ARABINOSE ISOMERASE"/>
    <property type="match status" value="1"/>
</dbReference>
<dbReference type="PANTHER" id="PTHR38464:SF1">
    <property type="entry name" value="L-ARABINOSE ISOMERASE"/>
    <property type="match status" value="1"/>
</dbReference>
<dbReference type="Pfam" id="PF24856">
    <property type="entry name" value="AraA_central"/>
    <property type="match status" value="1"/>
</dbReference>
<dbReference type="Pfam" id="PF02610">
    <property type="entry name" value="AraA_N"/>
    <property type="match status" value="1"/>
</dbReference>
<dbReference type="Pfam" id="PF11762">
    <property type="entry name" value="Arabinose_Iso_C"/>
    <property type="match status" value="1"/>
</dbReference>
<dbReference type="PIRSF" id="PIRSF001478">
    <property type="entry name" value="L-ara_isomerase"/>
    <property type="match status" value="1"/>
</dbReference>
<dbReference type="SUPFAM" id="SSF50443">
    <property type="entry name" value="FucI/AraA C-terminal domain-like"/>
    <property type="match status" value="1"/>
</dbReference>
<dbReference type="SUPFAM" id="SSF53743">
    <property type="entry name" value="FucI/AraA N-terminal and middle domains"/>
    <property type="match status" value="1"/>
</dbReference>
<name>ARAA_ESCF3</name>
<proteinExistence type="inferred from homology"/>
<reference key="1">
    <citation type="journal article" date="2009" name="PLoS Genet.">
        <title>Organised genome dynamics in the Escherichia coli species results in highly diverse adaptive paths.</title>
        <authorList>
            <person name="Touchon M."/>
            <person name="Hoede C."/>
            <person name="Tenaillon O."/>
            <person name="Barbe V."/>
            <person name="Baeriswyl S."/>
            <person name="Bidet P."/>
            <person name="Bingen E."/>
            <person name="Bonacorsi S."/>
            <person name="Bouchier C."/>
            <person name="Bouvet O."/>
            <person name="Calteau A."/>
            <person name="Chiapello H."/>
            <person name="Clermont O."/>
            <person name="Cruveiller S."/>
            <person name="Danchin A."/>
            <person name="Diard M."/>
            <person name="Dossat C."/>
            <person name="Karoui M.E."/>
            <person name="Frapy E."/>
            <person name="Garry L."/>
            <person name="Ghigo J.M."/>
            <person name="Gilles A.M."/>
            <person name="Johnson J."/>
            <person name="Le Bouguenec C."/>
            <person name="Lescat M."/>
            <person name="Mangenot S."/>
            <person name="Martinez-Jehanne V."/>
            <person name="Matic I."/>
            <person name="Nassif X."/>
            <person name="Oztas S."/>
            <person name="Petit M.A."/>
            <person name="Pichon C."/>
            <person name="Rouy Z."/>
            <person name="Ruf C.S."/>
            <person name="Schneider D."/>
            <person name="Tourret J."/>
            <person name="Vacherie B."/>
            <person name="Vallenet D."/>
            <person name="Medigue C."/>
            <person name="Rocha E.P.C."/>
            <person name="Denamur E."/>
        </authorList>
    </citation>
    <scope>NUCLEOTIDE SEQUENCE [LARGE SCALE GENOMIC DNA]</scope>
    <source>
        <strain>ATCC 35469 / DSM 13698 / BCRC 15582 / CCUG 18766 / IAM 14443 / JCM 21226 / LMG 7866 / NBRC 102419 / NCTC 12128 / CDC 0568-73</strain>
    </source>
</reference>